<evidence type="ECO:0000255" key="1">
    <source>
        <dbReference type="HAMAP-Rule" id="MF_00539"/>
    </source>
</evidence>
<evidence type="ECO:0000256" key="2">
    <source>
        <dbReference type="SAM" id="MobiDB-lite"/>
    </source>
</evidence>
<evidence type="ECO:0000305" key="3"/>
<protein>
    <recommendedName>
        <fullName evidence="1">Large ribosomal subunit protein bL27</fullName>
    </recommendedName>
    <alternativeName>
        <fullName evidence="3">50S ribosomal protein L27</fullName>
    </alternativeName>
</protein>
<organism>
    <name type="scientific">Rhodopseudomonas palustris (strain TIE-1)</name>
    <dbReference type="NCBI Taxonomy" id="395960"/>
    <lineage>
        <taxon>Bacteria</taxon>
        <taxon>Pseudomonadati</taxon>
        <taxon>Pseudomonadota</taxon>
        <taxon>Alphaproteobacteria</taxon>
        <taxon>Hyphomicrobiales</taxon>
        <taxon>Nitrobacteraceae</taxon>
        <taxon>Rhodopseudomonas</taxon>
    </lineage>
</organism>
<gene>
    <name evidence="1" type="primary">rpmA</name>
    <name type="ordered locus">Rpal_0152</name>
</gene>
<dbReference type="EMBL" id="CP001096">
    <property type="protein sequence ID" value="ACE98714.1"/>
    <property type="molecule type" value="Genomic_DNA"/>
</dbReference>
<dbReference type="RefSeq" id="WP_011155727.1">
    <property type="nucleotide sequence ID" value="NC_011004.1"/>
</dbReference>
<dbReference type="SMR" id="B3Q726"/>
<dbReference type="GeneID" id="66891162"/>
<dbReference type="KEGG" id="rpt:Rpal_0152"/>
<dbReference type="HOGENOM" id="CLU_095424_4_1_5"/>
<dbReference type="OrthoDB" id="9803474at2"/>
<dbReference type="Proteomes" id="UP000001725">
    <property type="component" value="Chromosome"/>
</dbReference>
<dbReference type="GO" id="GO:0022625">
    <property type="term" value="C:cytosolic large ribosomal subunit"/>
    <property type="evidence" value="ECO:0007669"/>
    <property type="project" value="TreeGrafter"/>
</dbReference>
<dbReference type="GO" id="GO:0003735">
    <property type="term" value="F:structural constituent of ribosome"/>
    <property type="evidence" value="ECO:0007669"/>
    <property type="project" value="InterPro"/>
</dbReference>
<dbReference type="GO" id="GO:0006412">
    <property type="term" value="P:translation"/>
    <property type="evidence" value="ECO:0007669"/>
    <property type="project" value="UniProtKB-UniRule"/>
</dbReference>
<dbReference type="FunFam" id="2.40.50.100:FF:000020">
    <property type="entry name" value="50S ribosomal protein L27"/>
    <property type="match status" value="1"/>
</dbReference>
<dbReference type="Gene3D" id="2.40.50.100">
    <property type="match status" value="1"/>
</dbReference>
<dbReference type="HAMAP" id="MF_00539">
    <property type="entry name" value="Ribosomal_bL27"/>
    <property type="match status" value="1"/>
</dbReference>
<dbReference type="InterPro" id="IPR001684">
    <property type="entry name" value="Ribosomal_bL27"/>
</dbReference>
<dbReference type="InterPro" id="IPR018261">
    <property type="entry name" value="Ribosomal_bL27_CS"/>
</dbReference>
<dbReference type="NCBIfam" id="TIGR00062">
    <property type="entry name" value="L27"/>
    <property type="match status" value="1"/>
</dbReference>
<dbReference type="PANTHER" id="PTHR15893:SF0">
    <property type="entry name" value="LARGE RIBOSOMAL SUBUNIT PROTEIN BL27M"/>
    <property type="match status" value="1"/>
</dbReference>
<dbReference type="PANTHER" id="PTHR15893">
    <property type="entry name" value="RIBOSOMAL PROTEIN L27"/>
    <property type="match status" value="1"/>
</dbReference>
<dbReference type="Pfam" id="PF01016">
    <property type="entry name" value="Ribosomal_L27"/>
    <property type="match status" value="1"/>
</dbReference>
<dbReference type="PRINTS" id="PR00063">
    <property type="entry name" value="RIBOSOMALL27"/>
</dbReference>
<dbReference type="SUPFAM" id="SSF110324">
    <property type="entry name" value="Ribosomal L27 protein-like"/>
    <property type="match status" value="1"/>
</dbReference>
<dbReference type="PROSITE" id="PS00831">
    <property type="entry name" value="RIBOSOMAL_L27"/>
    <property type="match status" value="1"/>
</dbReference>
<name>RL27_RHOPT</name>
<sequence length="90" mass="9581">MAHKKAGGSSRNGRDSAGKRLGVKAFGGEHVIPGNIIARQRGTQWHPGLNVGMGTDHTLFAKVEGRVEFRAKANGRTYVSVLPIAMQAAE</sequence>
<feature type="chain" id="PRO_1000128799" description="Large ribosomal subunit protein bL27">
    <location>
        <begin position="1"/>
        <end position="90"/>
    </location>
</feature>
<feature type="region of interest" description="Disordered" evidence="2">
    <location>
        <begin position="1"/>
        <end position="20"/>
    </location>
</feature>
<keyword id="KW-0687">Ribonucleoprotein</keyword>
<keyword id="KW-0689">Ribosomal protein</keyword>
<proteinExistence type="inferred from homology"/>
<accession>B3Q726</accession>
<comment type="similarity">
    <text evidence="1">Belongs to the bacterial ribosomal protein bL27 family.</text>
</comment>
<reference key="1">
    <citation type="submission" date="2008-05" db="EMBL/GenBank/DDBJ databases">
        <title>Complete sequence of Rhodopseudomonas palustris TIE-1.</title>
        <authorList>
            <consortium name="US DOE Joint Genome Institute"/>
            <person name="Lucas S."/>
            <person name="Copeland A."/>
            <person name="Lapidus A."/>
            <person name="Glavina del Rio T."/>
            <person name="Dalin E."/>
            <person name="Tice H."/>
            <person name="Pitluck S."/>
            <person name="Chain P."/>
            <person name="Malfatti S."/>
            <person name="Shin M."/>
            <person name="Vergez L."/>
            <person name="Lang D."/>
            <person name="Schmutz J."/>
            <person name="Larimer F."/>
            <person name="Land M."/>
            <person name="Hauser L."/>
            <person name="Kyrpides N."/>
            <person name="Mikhailova N."/>
            <person name="Emerson D."/>
            <person name="Newman D.K."/>
            <person name="Roden E."/>
            <person name="Richardson P."/>
        </authorList>
    </citation>
    <scope>NUCLEOTIDE SEQUENCE [LARGE SCALE GENOMIC DNA]</scope>
    <source>
        <strain>TIE-1</strain>
    </source>
</reference>